<comment type="function">
    <text evidence="1">Catalyzes the decarboxylative condensation of pimeloyl-[acyl-carrier protein] and L-alanine to produce 8-amino-7-oxononanoate (AON), [acyl-carrier protein], and carbon dioxide.</text>
</comment>
<comment type="catalytic activity">
    <reaction evidence="1">
        <text>6-carboxyhexanoyl-[ACP] + L-alanine + H(+) = (8S)-8-amino-7-oxononanoate + holo-[ACP] + CO2</text>
        <dbReference type="Rhea" id="RHEA:42288"/>
        <dbReference type="Rhea" id="RHEA-COMP:9685"/>
        <dbReference type="Rhea" id="RHEA-COMP:9955"/>
        <dbReference type="ChEBI" id="CHEBI:15378"/>
        <dbReference type="ChEBI" id="CHEBI:16526"/>
        <dbReference type="ChEBI" id="CHEBI:57972"/>
        <dbReference type="ChEBI" id="CHEBI:64479"/>
        <dbReference type="ChEBI" id="CHEBI:78846"/>
        <dbReference type="ChEBI" id="CHEBI:149468"/>
        <dbReference type="EC" id="2.3.1.47"/>
    </reaction>
</comment>
<comment type="cofactor">
    <cofactor evidence="1">
        <name>pyridoxal 5'-phosphate</name>
        <dbReference type="ChEBI" id="CHEBI:597326"/>
    </cofactor>
</comment>
<comment type="pathway">
    <text evidence="1">Cofactor biosynthesis; biotin biosynthesis.</text>
</comment>
<comment type="subunit">
    <text evidence="1">Homodimer.</text>
</comment>
<comment type="similarity">
    <text evidence="1">Belongs to the class-II pyridoxal-phosphate-dependent aminotransferase family. BioF subfamily.</text>
</comment>
<sequence>MLNDLDSIHQTDEGLREYLRSRGNRSLYRYRLTLESPQAPRITVSGREYLAFCSNDYLGLANHPELIAALCEGATQYGVGAGTSHLVSGHSRAHHLLEEALASFTRFPRALLFSTGYMANAGVVTALTGRGDAVFGDKLNHASLNDAALLSRARLSRYPHLDLATLERQLAASPARRKLVISDAVFSMDGDIAPLPELLELCERYDAWLLLDDAHGFGVLGNQGRGSLAHFNISSPRIIYMGTLGKAAGVFGAFVAAQEEIIETLIQCARSYIYTTATPPFLSHALLKSLELIAGGAGRREKLAQLTKLLKQECHPLRWQLLPSDTPIQPLVMGENAEALQVSEALRQKGILVTAIRPPTVPEGTARLRISLSSSHDIEDVMELGAALREIDRDME</sequence>
<protein>
    <recommendedName>
        <fullName evidence="1">8-amino-7-oxononanoate synthase</fullName>
        <shortName evidence="1">AONS</shortName>
        <ecNumber evidence="1">2.3.1.47</ecNumber>
    </recommendedName>
    <alternativeName>
        <fullName evidence="1">7-keto-8-amino-pelargonic acid synthase</fullName>
        <shortName evidence="1">7-KAP synthase</shortName>
        <shortName evidence="1">KAPA synthase</shortName>
    </alternativeName>
    <alternativeName>
        <fullName evidence="1">8-amino-7-ketopelargonate synthase</fullName>
    </alternativeName>
</protein>
<feature type="chain" id="PRO_0000381056" description="8-amino-7-oxononanoate synthase">
    <location>
        <begin position="1"/>
        <end position="396"/>
    </location>
</feature>
<feature type="binding site" evidence="1">
    <location>
        <position position="29"/>
    </location>
    <ligand>
        <name>substrate</name>
    </ligand>
</feature>
<feature type="binding site" evidence="1">
    <location>
        <begin position="116"/>
        <end position="117"/>
    </location>
    <ligand>
        <name>pyridoxal 5'-phosphate</name>
        <dbReference type="ChEBI" id="CHEBI:597326"/>
    </ligand>
</feature>
<feature type="binding site" evidence="1">
    <location>
        <position position="141"/>
    </location>
    <ligand>
        <name>substrate</name>
    </ligand>
</feature>
<feature type="binding site" evidence="1">
    <location>
        <position position="187"/>
    </location>
    <ligand>
        <name>pyridoxal 5'-phosphate</name>
        <dbReference type="ChEBI" id="CHEBI:597326"/>
    </ligand>
</feature>
<feature type="binding site" evidence="1">
    <location>
        <position position="215"/>
    </location>
    <ligand>
        <name>pyridoxal 5'-phosphate</name>
        <dbReference type="ChEBI" id="CHEBI:597326"/>
    </ligand>
</feature>
<feature type="binding site" evidence="1">
    <location>
        <position position="243"/>
    </location>
    <ligand>
        <name>pyridoxal 5'-phosphate</name>
        <dbReference type="ChEBI" id="CHEBI:597326"/>
    </ligand>
</feature>
<feature type="binding site" evidence="1">
    <location>
        <position position="360"/>
    </location>
    <ligand>
        <name>substrate</name>
    </ligand>
</feature>
<feature type="modified residue" description="N6-(pyridoxal phosphate)lysine" evidence="1">
    <location>
        <position position="246"/>
    </location>
</feature>
<accession>Q2Y9Y8</accession>
<dbReference type="EC" id="2.3.1.47" evidence="1"/>
<dbReference type="EMBL" id="CP000103">
    <property type="protein sequence ID" value="ABB74433.1"/>
    <property type="molecule type" value="Genomic_DNA"/>
</dbReference>
<dbReference type="RefSeq" id="WP_011380474.1">
    <property type="nucleotide sequence ID" value="NC_007614.1"/>
</dbReference>
<dbReference type="SMR" id="Q2Y9Y8"/>
<dbReference type="STRING" id="323848.Nmul_A1130"/>
<dbReference type="KEGG" id="nmu:Nmul_A1130"/>
<dbReference type="eggNOG" id="COG0156">
    <property type="taxonomic scope" value="Bacteria"/>
</dbReference>
<dbReference type="HOGENOM" id="CLU_015846_11_2_4"/>
<dbReference type="OrthoDB" id="9807157at2"/>
<dbReference type="UniPathway" id="UPA00078"/>
<dbReference type="Proteomes" id="UP000002718">
    <property type="component" value="Chromosome"/>
</dbReference>
<dbReference type="GO" id="GO:0008710">
    <property type="term" value="F:8-amino-7-oxononanoate synthase activity"/>
    <property type="evidence" value="ECO:0007669"/>
    <property type="project" value="UniProtKB-UniRule"/>
</dbReference>
<dbReference type="GO" id="GO:0030170">
    <property type="term" value="F:pyridoxal phosphate binding"/>
    <property type="evidence" value="ECO:0007669"/>
    <property type="project" value="UniProtKB-UniRule"/>
</dbReference>
<dbReference type="GO" id="GO:0009102">
    <property type="term" value="P:biotin biosynthetic process"/>
    <property type="evidence" value="ECO:0007669"/>
    <property type="project" value="UniProtKB-UniRule"/>
</dbReference>
<dbReference type="CDD" id="cd06454">
    <property type="entry name" value="KBL_like"/>
    <property type="match status" value="1"/>
</dbReference>
<dbReference type="Gene3D" id="3.90.1150.10">
    <property type="entry name" value="Aspartate Aminotransferase, domain 1"/>
    <property type="match status" value="1"/>
</dbReference>
<dbReference type="Gene3D" id="3.40.640.10">
    <property type="entry name" value="Type I PLP-dependent aspartate aminotransferase-like (Major domain)"/>
    <property type="match status" value="1"/>
</dbReference>
<dbReference type="HAMAP" id="MF_01693">
    <property type="entry name" value="BioF_aminotrans_2"/>
    <property type="match status" value="1"/>
</dbReference>
<dbReference type="InterPro" id="IPR004839">
    <property type="entry name" value="Aminotransferase_I/II_large"/>
</dbReference>
<dbReference type="InterPro" id="IPR050087">
    <property type="entry name" value="AON_synthase_class-II"/>
</dbReference>
<dbReference type="InterPro" id="IPR004723">
    <property type="entry name" value="AONS_Archaea/Proteobacteria"/>
</dbReference>
<dbReference type="InterPro" id="IPR022834">
    <property type="entry name" value="AONS_Proteobacteria"/>
</dbReference>
<dbReference type="InterPro" id="IPR015424">
    <property type="entry name" value="PyrdxlP-dep_Trfase"/>
</dbReference>
<dbReference type="InterPro" id="IPR015421">
    <property type="entry name" value="PyrdxlP-dep_Trfase_major"/>
</dbReference>
<dbReference type="InterPro" id="IPR015422">
    <property type="entry name" value="PyrdxlP-dep_Trfase_small"/>
</dbReference>
<dbReference type="NCBIfam" id="TIGR00858">
    <property type="entry name" value="bioF"/>
    <property type="match status" value="1"/>
</dbReference>
<dbReference type="PANTHER" id="PTHR13693:SF100">
    <property type="entry name" value="8-AMINO-7-OXONONANOATE SYNTHASE"/>
    <property type="match status" value="1"/>
</dbReference>
<dbReference type="PANTHER" id="PTHR13693">
    <property type="entry name" value="CLASS II AMINOTRANSFERASE/8-AMINO-7-OXONONANOATE SYNTHASE"/>
    <property type="match status" value="1"/>
</dbReference>
<dbReference type="Pfam" id="PF00155">
    <property type="entry name" value="Aminotran_1_2"/>
    <property type="match status" value="1"/>
</dbReference>
<dbReference type="SUPFAM" id="SSF53383">
    <property type="entry name" value="PLP-dependent transferases"/>
    <property type="match status" value="1"/>
</dbReference>
<gene>
    <name evidence="1" type="primary">bioF</name>
    <name type="ordered locus">Nmul_A1130</name>
</gene>
<reference key="1">
    <citation type="submission" date="2005-08" db="EMBL/GenBank/DDBJ databases">
        <title>Complete sequence of chromosome 1 of Nitrosospira multiformis ATCC 25196.</title>
        <authorList>
            <person name="Copeland A."/>
            <person name="Lucas S."/>
            <person name="Lapidus A."/>
            <person name="Barry K."/>
            <person name="Detter J.C."/>
            <person name="Glavina T."/>
            <person name="Hammon N."/>
            <person name="Israni S."/>
            <person name="Pitluck S."/>
            <person name="Chain P."/>
            <person name="Malfatti S."/>
            <person name="Shin M."/>
            <person name="Vergez L."/>
            <person name="Schmutz J."/>
            <person name="Larimer F."/>
            <person name="Land M."/>
            <person name="Hauser L."/>
            <person name="Kyrpides N."/>
            <person name="Lykidis A."/>
            <person name="Richardson P."/>
        </authorList>
    </citation>
    <scope>NUCLEOTIDE SEQUENCE [LARGE SCALE GENOMIC DNA]</scope>
    <source>
        <strain>ATCC 25196 / NCIMB 11849 / C 71</strain>
    </source>
</reference>
<evidence type="ECO:0000255" key="1">
    <source>
        <dbReference type="HAMAP-Rule" id="MF_01693"/>
    </source>
</evidence>
<proteinExistence type="inferred from homology"/>
<name>BIOF_NITMU</name>
<keyword id="KW-0093">Biotin biosynthesis</keyword>
<keyword id="KW-0663">Pyridoxal phosphate</keyword>
<keyword id="KW-1185">Reference proteome</keyword>
<keyword id="KW-0808">Transferase</keyword>
<organism>
    <name type="scientific">Nitrosospira multiformis (strain ATCC 25196 / NCIMB 11849 / C 71)</name>
    <dbReference type="NCBI Taxonomy" id="323848"/>
    <lineage>
        <taxon>Bacteria</taxon>
        <taxon>Pseudomonadati</taxon>
        <taxon>Pseudomonadota</taxon>
        <taxon>Betaproteobacteria</taxon>
        <taxon>Nitrosomonadales</taxon>
        <taxon>Nitrosomonadaceae</taxon>
        <taxon>Nitrosospira</taxon>
    </lineage>
</organism>